<sequence length="219" mass="23840">MDFGDDFAAKEDVDPAAEFLAREQSALGDLEAEITGGSASAPPAASTDEGLGELLGGTASEGDLLSAGGTGGLESSTGSFEVIGGESNEPVGISGPPPSREEPEKIRKWREEQKQRLEEKDIEEERKKEELRQQSKKELDDWLRQIGESISKTKLASRNAEKQAATLENGTIEPGTEWERIAKLCDFNPKVNKAGKDVSRMRSIYLHLKQNPIQVQKST</sequence>
<dbReference type="EMBL" id="AF055900">
    <property type="protein sequence ID" value="AAC14276.1"/>
    <property type="molecule type" value="mRNA"/>
</dbReference>
<dbReference type="EMBL" id="AE014296">
    <property type="protein sequence ID" value="AAF49047.1"/>
    <property type="molecule type" value="Genomic_DNA"/>
</dbReference>
<dbReference type="EMBL" id="AY121633">
    <property type="protein sequence ID" value="AAM51960.1"/>
    <property type="molecule type" value="mRNA"/>
</dbReference>
<dbReference type="RefSeq" id="NP_001163480.1">
    <property type="nucleotide sequence ID" value="NM_001170009.1"/>
</dbReference>
<dbReference type="RefSeq" id="NP_001163481.1">
    <property type="nucleotide sequence ID" value="NM_001170010.2"/>
</dbReference>
<dbReference type="RefSeq" id="NP_001262101.1">
    <property type="nucleotide sequence ID" value="NM_001275172.1"/>
</dbReference>
<dbReference type="RefSeq" id="NP_524178.2">
    <property type="nucleotide sequence ID" value="NM_079454.3"/>
</dbReference>
<dbReference type="SMR" id="Q9VWA1"/>
<dbReference type="BioGRID" id="65485">
    <property type="interactions" value="7"/>
</dbReference>
<dbReference type="ComplexPortal" id="CPX-2792">
    <property type="entry name" value="Clathrin complex"/>
</dbReference>
<dbReference type="DIP" id="DIP-20236N"/>
<dbReference type="FunCoup" id="Q9VWA1">
    <property type="interactions" value="1623"/>
</dbReference>
<dbReference type="IntAct" id="Q9VWA1">
    <property type="interactions" value="18"/>
</dbReference>
<dbReference type="STRING" id="7227.FBpp0290348"/>
<dbReference type="PaxDb" id="7227-FBpp0290037"/>
<dbReference type="DNASU" id="40221"/>
<dbReference type="EnsemblMetazoa" id="FBtr0074830">
    <property type="protein sequence ID" value="FBpp0074599"/>
    <property type="gene ID" value="FBgn0024814"/>
</dbReference>
<dbReference type="EnsemblMetazoa" id="FBtr0300813">
    <property type="protein sequence ID" value="FBpp0290037"/>
    <property type="gene ID" value="FBgn0024814"/>
</dbReference>
<dbReference type="EnsemblMetazoa" id="FBtr0301126">
    <property type="protein sequence ID" value="FBpp0290348"/>
    <property type="gene ID" value="FBgn0024814"/>
</dbReference>
<dbReference type="EnsemblMetazoa" id="FBtr0332771">
    <property type="protein sequence ID" value="FBpp0305007"/>
    <property type="gene ID" value="FBgn0024814"/>
</dbReference>
<dbReference type="GeneID" id="40221"/>
<dbReference type="KEGG" id="dme:Dmel_CG6948"/>
<dbReference type="AGR" id="FB:FBgn0024814"/>
<dbReference type="CTD" id="1178"/>
<dbReference type="FlyBase" id="FBgn0024814">
    <property type="gene designation" value="Clc"/>
</dbReference>
<dbReference type="VEuPathDB" id="VectorBase:FBgn0024814"/>
<dbReference type="eggNOG" id="KOG4031">
    <property type="taxonomic scope" value="Eukaryota"/>
</dbReference>
<dbReference type="GeneTree" id="ENSGT00940000176029"/>
<dbReference type="HOGENOM" id="CLU_091462_0_0_1"/>
<dbReference type="InParanoid" id="Q9VWA1"/>
<dbReference type="OMA" id="FYENYNT"/>
<dbReference type="OrthoDB" id="5512at2759"/>
<dbReference type="PhylomeDB" id="Q9VWA1"/>
<dbReference type="Reactome" id="R-DME-177504">
    <property type="pathway name" value="Retrograde neurotrophin signalling"/>
</dbReference>
<dbReference type="Reactome" id="R-DME-190873">
    <property type="pathway name" value="Gap junction degradation"/>
</dbReference>
<dbReference type="Reactome" id="R-DME-196025">
    <property type="pathway name" value="Formation of annular gap junctions"/>
</dbReference>
<dbReference type="Reactome" id="R-DME-3928665">
    <property type="pathway name" value="EPH-ephrin mediated repulsion of cells"/>
</dbReference>
<dbReference type="Reactome" id="R-DME-432720">
    <property type="pathway name" value="Lysosome Vesicle Biogenesis"/>
</dbReference>
<dbReference type="Reactome" id="R-DME-432722">
    <property type="pathway name" value="Golgi Associated Vesicle Biogenesis"/>
</dbReference>
<dbReference type="Reactome" id="R-DME-437239">
    <property type="pathway name" value="Recycling pathway of L1"/>
</dbReference>
<dbReference type="Reactome" id="R-DME-5099900">
    <property type="pathway name" value="WNT5A-dependent internalization of FZD4"/>
</dbReference>
<dbReference type="Reactome" id="R-DME-5140745">
    <property type="pathway name" value="WNT5A-dependent internalization of FZD2, FZD5 and ROR2"/>
</dbReference>
<dbReference type="Reactome" id="R-DME-8856825">
    <property type="pathway name" value="Cargo recognition for clathrin-mediated endocytosis"/>
</dbReference>
<dbReference type="Reactome" id="R-DME-8856828">
    <property type="pathway name" value="Clathrin-mediated endocytosis"/>
</dbReference>
<dbReference type="Reactome" id="R-DME-8866427">
    <property type="pathway name" value="VLDLR internalisation and degradation"/>
</dbReference>
<dbReference type="Reactome" id="R-DME-8964038">
    <property type="pathway name" value="LDL clearance"/>
</dbReference>
<dbReference type="SignaLink" id="Q9VWA1"/>
<dbReference type="BioGRID-ORCS" id="40221">
    <property type="hits" value="0 hits in 3 CRISPR screens"/>
</dbReference>
<dbReference type="GenomeRNAi" id="40221"/>
<dbReference type="PRO" id="PR:Q9VWA1"/>
<dbReference type="Proteomes" id="UP000000803">
    <property type="component" value="Chromosome 3L"/>
</dbReference>
<dbReference type="Bgee" id="FBgn0024814">
    <property type="expression patterns" value="Expressed in adult middle midgut class II enteroendocrine cell in adult midgut (Drosophila) and 230 other cell types or tissues"/>
</dbReference>
<dbReference type="ExpressionAtlas" id="Q9VWA1">
    <property type="expression patterns" value="baseline and differential"/>
</dbReference>
<dbReference type="GO" id="GO:0005938">
    <property type="term" value="C:cell cortex"/>
    <property type="evidence" value="ECO:0000314"/>
    <property type="project" value="FlyBase"/>
</dbReference>
<dbReference type="GO" id="GO:0030132">
    <property type="term" value="C:clathrin coat of coated pit"/>
    <property type="evidence" value="ECO:0000314"/>
    <property type="project" value="FlyBase"/>
</dbReference>
<dbReference type="GO" id="GO:0030130">
    <property type="term" value="C:clathrin coat of trans-Golgi network vesicle"/>
    <property type="evidence" value="ECO:0007669"/>
    <property type="project" value="InterPro"/>
</dbReference>
<dbReference type="GO" id="GO:0071439">
    <property type="term" value="C:clathrin complex"/>
    <property type="evidence" value="ECO:0000250"/>
    <property type="project" value="FlyBase"/>
</dbReference>
<dbReference type="GO" id="GO:0030125">
    <property type="term" value="C:clathrin vesicle coat"/>
    <property type="evidence" value="ECO:0000314"/>
    <property type="project" value="FlyBase"/>
</dbReference>
<dbReference type="GO" id="GO:0030136">
    <property type="term" value="C:clathrin-coated vesicle"/>
    <property type="evidence" value="ECO:0000314"/>
    <property type="project" value="FlyBase"/>
</dbReference>
<dbReference type="GO" id="GO:0005737">
    <property type="term" value="C:cytoplasm"/>
    <property type="evidence" value="ECO:0000314"/>
    <property type="project" value="FlyBase"/>
</dbReference>
<dbReference type="GO" id="GO:0072686">
    <property type="term" value="C:mitotic spindle"/>
    <property type="evidence" value="ECO:0000314"/>
    <property type="project" value="FlyBase"/>
</dbReference>
<dbReference type="GO" id="GO:0005886">
    <property type="term" value="C:plasma membrane"/>
    <property type="evidence" value="ECO:0000314"/>
    <property type="project" value="FlyBase"/>
</dbReference>
<dbReference type="GO" id="GO:0030672">
    <property type="term" value="C:synaptic vesicle membrane"/>
    <property type="evidence" value="ECO:0000318"/>
    <property type="project" value="GO_Central"/>
</dbReference>
<dbReference type="GO" id="GO:0032050">
    <property type="term" value="F:clathrin heavy chain binding"/>
    <property type="evidence" value="ECO:0000250"/>
    <property type="project" value="FlyBase"/>
</dbReference>
<dbReference type="GO" id="GO:0005198">
    <property type="term" value="F:structural molecule activity"/>
    <property type="evidence" value="ECO:0007669"/>
    <property type="project" value="InterPro"/>
</dbReference>
<dbReference type="GO" id="GO:0072583">
    <property type="term" value="P:clathrin-dependent endocytosis"/>
    <property type="evidence" value="ECO:0000314"/>
    <property type="project" value="FlyBase"/>
</dbReference>
<dbReference type="GO" id="GO:0006886">
    <property type="term" value="P:intracellular protein transport"/>
    <property type="evidence" value="ECO:0007669"/>
    <property type="project" value="InterPro"/>
</dbReference>
<dbReference type="InterPro" id="IPR000996">
    <property type="entry name" value="Clathrin_L-chain"/>
</dbReference>
<dbReference type="PANTHER" id="PTHR10639">
    <property type="entry name" value="CLATHRIN LIGHT CHAIN"/>
    <property type="match status" value="1"/>
</dbReference>
<dbReference type="PANTHER" id="PTHR10639:SF7">
    <property type="entry name" value="CLATHRIN LIGHT CHAIN"/>
    <property type="match status" value="1"/>
</dbReference>
<dbReference type="Pfam" id="PF01086">
    <property type="entry name" value="Clathrin_lg_ch"/>
    <property type="match status" value="1"/>
</dbReference>
<dbReference type="PROSITE" id="PS00581">
    <property type="entry name" value="CLATHRIN_LIGHT_CHN_2"/>
    <property type="match status" value="1"/>
</dbReference>
<gene>
    <name type="primary">Clc</name>
    <name type="ORF">CG6948</name>
</gene>
<organism>
    <name type="scientific">Drosophila melanogaster</name>
    <name type="common">Fruit fly</name>
    <dbReference type="NCBI Taxonomy" id="7227"/>
    <lineage>
        <taxon>Eukaryota</taxon>
        <taxon>Metazoa</taxon>
        <taxon>Ecdysozoa</taxon>
        <taxon>Arthropoda</taxon>
        <taxon>Hexapoda</taxon>
        <taxon>Insecta</taxon>
        <taxon>Pterygota</taxon>
        <taxon>Neoptera</taxon>
        <taxon>Endopterygota</taxon>
        <taxon>Diptera</taxon>
        <taxon>Brachycera</taxon>
        <taxon>Muscomorpha</taxon>
        <taxon>Ephydroidea</taxon>
        <taxon>Drosophilidae</taxon>
        <taxon>Drosophila</taxon>
        <taxon>Sophophora</taxon>
    </lineage>
</organism>
<reference evidence="5" key="1">
    <citation type="journal article" date="1999" name="DNA Cell Biol.">
        <title>A Drosophila clathrin light-chain gene: sequence, mapping, and absence of neuronal specialization.</title>
        <authorList>
            <person name="Vasyukevich K."/>
            <person name="Bazinet C."/>
        </authorList>
    </citation>
    <scope>NUCLEOTIDE SEQUENCE [MRNA]</scope>
    <scope>DEVELOPMENTAL STAGE</scope>
</reference>
<reference evidence="5" key="2">
    <citation type="journal article" date="2000" name="Science">
        <title>The genome sequence of Drosophila melanogaster.</title>
        <authorList>
            <person name="Adams M.D."/>
            <person name="Celniker S.E."/>
            <person name="Holt R.A."/>
            <person name="Evans C.A."/>
            <person name="Gocayne J.D."/>
            <person name="Amanatides P.G."/>
            <person name="Scherer S.E."/>
            <person name="Li P.W."/>
            <person name="Hoskins R.A."/>
            <person name="Galle R.F."/>
            <person name="George R.A."/>
            <person name="Lewis S.E."/>
            <person name="Richards S."/>
            <person name="Ashburner M."/>
            <person name="Henderson S.N."/>
            <person name="Sutton G.G."/>
            <person name="Wortman J.R."/>
            <person name="Yandell M.D."/>
            <person name="Zhang Q."/>
            <person name="Chen L.X."/>
            <person name="Brandon R.C."/>
            <person name="Rogers Y.-H.C."/>
            <person name="Blazej R.G."/>
            <person name="Champe M."/>
            <person name="Pfeiffer B.D."/>
            <person name="Wan K.H."/>
            <person name="Doyle C."/>
            <person name="Baxter E.G."/>
            <person name="Helt G."/>
            <person name="Nelson C.R."/>
            <person name="Miklos G.L.G."/>
            <person name="Abril J.F."/>
            <person name="Agbayani A."/>
            <person name="An H.-J."/>
            <person name="Andrews-Pfannkoch C."/>
            <person name="Baldwin D."/>
            <person name="Ballew R.M."/>
            <person name="Basu A."/>
            <person name="Baxendale J."/>
            <person name="Bayraktaroglu L."/>
            <person name="Beasley E.M."/>
            <person name="Beeson K.Y."/>
            <person name="Benos P.V."/>
            <person name="Berman B.P."/>
            <person name="Bhandari D."/>
            <person name="Bolshakov S."/>
            <person name="Borkova D."/>
            <person name="Botchan M.R."/>
            <person name="Bouck J."/>
            <person name="Brokstein P."/>
            <person name="Brottier P."/>
            <person name="Burtis K.C."/>
            <person name="Busam D.A."/>
            <person name="Butler H."/>
            <person name="Cadieu E."/>
            <person name="Center A."/>
            <person name="Chandra I."/>
            <person name="Cherry J.M."/>
            <person name="Cawley S."/>
            <person name="Dahlke C."/>
            <person name="Davenport L.B."/>
            <person name="Davies P."/>
            <person name="de Pablos B."/>
            <person name="Delcher A."/>
            <person name="Deng Z."/>
            <person name="Mays A.D."/>
            <person name="Dew I."/>
            <person name="Dietz S.M."/>
            <person name="Dodson K."/>
            <person name="Doup L.E."/>
            <person name="Downes M."/>
            <person name="Dugan-Rocha S."/>
            <person name="Dunkov B.C."/>
            <person name="Dunn P."/>
            <person name="Durbin K.J."/>
            <person name="Evangelista C.C."/>
            <person name="Ferraz C."/>
            <person name="Ferriera S."/>
            <person name="Fleischmann W."/>
            <person name="Fosler C."/>
            <person name="Gabrielian A.E."/>
            <person name="Garg N.S."/>
            <person name="Gelbart W.M."/>
            <person name="Glasser K."/>
            <person name="Glodek A."/>
            <person name="Gong F."/>
            <person name="Gorrell J.H."/>
            <person name="Gu Z."/>
            <person name="Guan P."/>
            <person name="Harris M."/>
            <person name="Harris N.L."/>
            <person name="Harvey D.A."/>
            <person name="Heiman T.J."/>
            <person name="Hernandez J.R."/>
            <person name="Houck J."/>
            <person name="Hostin D."/>
            <person name="Houston K.A."/>
            <person name="Howland T.J."/>
            <person name="Wei M.-H."/>
            <person name="Ibegwam C."/>
            <person name="Jalali M."/>
            <person name="Kalush F."/>
            <person name="Karpen G.H."/>
            <person name="Ke Z."/>
            <person name="Kennison J.A."/>
            <person name="Ketchum K.A."/>
            <person name="Kimmel B.E."/>
            <person name="Kodira C.D."/>
            <person name="Kraft C.L."/>
            <person name="Kravitz S."/>
            <person name="Kulp D."/>
            <person name="Lai Z."/>
            <person name="Lasko P."/>
            <person name="Lei Y."/>
            <person name="Levitsky A.A."/>
            <person name="Li J.H."/>
            <person name="Li Z."/>
            <person name="Liang Y."/>
            <person name="Lin X."/>
            <person name="Liu X."/>
            <person name="Mattei B."/>
            <person name="McIntosh T.C."/>
            <person name="McLeod M.P."/>
            <person name="McPherson D."/>
            <person name="Merkulov G."/>
            <person name="Milshina N.V."/>
            <person name="Mobarry C."/>
            <person name="Morris J."/>
            <person name="Moshrefi A."/>
            <person name="Mount S.M."/>
            <person name="Moy M."/>
            <person name="Murphy B."/>
            <person name="Murphy L."/>
            <person name="Muzny D.M."/>
            <person name="Nelson D.L."/>
            <person name="Nelson D.R."/>
            <person name="Nelson K.A."/>
            <person name="Nixon K."/>
            <person name="Nusskern D.R."/>
            <person name="Pacleb J.M."/>
            <person name="Palazzolo M."/>
            <person name="Pittman G.S."/>
            <person name="Pan S."/>
            <person name="Pollard J."/>
            <person name="Puri V."/>
            <person name="Reese M.G."/>
            <person name="Reinert K."/>
            <person name="Remington K."/>
            <person name="Saunders R.D.C."/>
            <person name="Scheeler F."/>
            <person name="Shen H."/>
            <person name="Shue B.C."/>
            <person name="Siden-Kiamos I."/>
            <person name="Simpson M."/>
            <person name="Skupski M.P."/>
            <person name="Smith T.J."/>
            <person name="Spier E."/>
            <person name="Spradling A.C."/>
            <person name="Stapleton M."/>
            <person name="Strong R."/>
            <person name="Sun E."/>
            <person name="Svirskas R."/>
            <person name="Tector C."/>
            <person name="Turner R."/>
            <person name="Venter E."/>
            <person name="Wang A.H."/>
            <person name="Wang X."/>
            <person name="Wang Z.-Y."/>
            <person name="Wassarman D.A."/>
            <person name="Weinstock G.M."/>
            <person name="Weissenbach J."/>
            <person name="Williams S.M."/>
            <person name="Woodage T."/>
            <person name="Worley K.C."/>
            <person name="Wu D."/>
            <person name="Yang S."/>
            <person name="Yao Q.A."/>
            <person name="Ye J."/>
            <person name="Yeh R.-F."/>
            <person name="Zaveri J.S."/>
            <person name="Zhan M."/>
            <person name="Zhang G."/>
            <person name="Zhao Q."/>
            <person name="Zheng L."/>
            <person name="Zheng X.H."/>
            <person name="Zhong F.N."/>
            <person name="Zhong W."/>
            <person name="Zhou X."/>
            <person name="Zhu S.C."/>
            <person name="Zhu X."/>
            <person name="Smith H.O."/>
            <person name="Gibbs R.A."/>
            <person name="Myers E.W."/>
            <person name="Rubin G.M."/>
            <person name="Venter J.C."/>
        </authorList>
    </citation>
    <scope>NUCLEOTIDE SEQUENCE [LARGE SCALE GENOMIC DNA]</scope>
    <source>
        <strain>Berkeley</strain>
    </source>
</reference>
<reference key="3">
    <citation type="journal article" date="2002" name="Genome Biol.">
        <title>Annotation of the Drosophila melanogaster euchromatic genome: a systematic review.</title>
        <authorList>
            <person name="Misra S."/>
            <person name="Crosby M.A."/>
            <person name="Mungall C.J."/>
            <person name="Matthews B.B."/>
            <person name="Campbell K.S."/>
            <person name="Hradecky P."/>
            <person name="Huang Y."/>
            <person name="Kaminker J.S."/>
            <person name="Millburn G.H."/>
            <person name="Prochnik S.E."/>
            <person name="Smith C.D."/>
            <person name="Tupy J.L."/>
            <person name="Whitfield E.J."/>
            <person name="Bayraktaroglu L."/>
            <person name="Berman B.P."/>
            <person name="Bettencourt B.R."/>
            <person name="Celniker S.E."/>
            <person name="de Grey A.D.N.J."/>
            <person name="Drysdale R.A."/>
            <person name="Harris N.L."/>
            <person name="Richter J."/>
            <person name="Russo S."/>
            <person name="Schroeder A.J."/>
            <person name="Shu S.Q."/>
            <person name="Stapleton M."/>
            <person name="Yamada C."/>
            <person name="Ashburner M."/>
            <person name="Gelbart W.M."/>
            <person name="Rubin G.M."/>
            <person name="Lewis S.E."/>
        </authorList>
    </citation>
    <scope>GENOME REANNOTATION</scope>
    <source>
        <strain>Berkeley</strain>
    </source>
</reference>
<reference key="4">
    <citation type="journal article" date="2002" name="Genome Biol.">
        <title>A Drosophila full-length cDNA resource.</title>
        <authorList>
            <person name="Stapleton M."/>
            <person name="Carlson J.W."/>
            <person name="Brokstein P."/>
            <person name="Yu C."/>
            <person name="Champe M."/>
            <person name="George R.A."/>
            <person name="Guarin H."/>
            <person name="Kronmiller B."/>
            <person name="Pacleb J.M."/>
            <person name="Park S."/>
            <person name="Wan K.H."/>
            <person name="Rubin G.M."/>
            <person name="Celniker S.E."/>
        </authorList>
    </citation>
    <scope>NUCLEOTIDE SEQUENCE [LARGE SCALE MRNA]</scope>
    <source>
        <strain>Berkeley</strain>
        <tissue>Ovary</tissue>
    </source>
</reference>
<feature type="chain" id="PRO_0000205774" description="Clathrin light chain">
    <location>
        <begin position="1"/>
        <end position="219"/>
    </location>
</feature>
<feature type="region of interest" description="Disordered" evidence="3">
    <location>
        <begin position="32"/>
        <end position="136"/>
    </location>
</feature>
<feature type="region of interest" description="Involved in binding clathrin heavy chain" evidence="1">
    <location>
        <begin position="96"/>
        <end position="158"/>
    </location>
</feature>
<feature type="compositionally biased region" description="Basic and acidic residues" evidence="3">
    <location>
        <begin position="99"/>
        <end position="136"/>
    </location>
</feature>
<feature type="sequence conflict" description="In Ref. 1; AAC14276." evidence="5" ref="1">
    <original>ST</original>
    <variation>RHLGSFNYALA</variation>
    <location>
        <begin position="218"/>
        <end position="219"/>
    </location>
</feature>
<evidence type="ECO:0000250" key="1"/>
<evidence type="ECO:0000250" key="2">
    <source>
        <dbReference type="UniProtKB" id="P04975"/>
    </source>
</evidence>
<evidence type="ECO:0000256" key="3">
    <source>
        <dbReference type="SAM" id="MobiDB-lite"/>
    </source>
</evidence>
<evidence type="ECO:0000269" key="4">
    <source>
    </source>
</evidence>
<evidence type="ECO:0000305" key="5"/>
<name>CLC_DROME</name>
<comment type="function">
    <text evidence="2">Clathrin is the major protein of the polyhedral coat of coated pits and vesicles.</text>
</comment>
<comment type="subunit">
    <text evidence="2">Clathrin coats are formed from molecules containing 3 heavy chains and 3 light chains.</text>
</comment>
<comment type="interaction">
    <interactant intactId="EBI-193562">
        <id>Q9VWA1</id>
    </interactant>
    <interactant intactId="EBI-98352">
        <id>Q9VAN8</id>
        <label>Dmel\CG11882</label>
    </interactant>
    <organismsDiffer>false</organismsDiffer>
    <experiments>4</experiments>
</comment>
<comment type="subcellular location">
    <subcellularLocation>
        <location>Cytoplasmic vesicle membrane</location>
        <topology>Peripheral membrane protein</topology>
        <orientation>Cytoplasmic side</orientation>
    </subcellularLocation>
    <subcellularLocation>
        <location>Membrane</location>
        <location>Coated pit</location>
        <topology>Peripheral membrane protein</topology>
        <orientation>Cytoplasmic side</orientation>
    </subcellularLocation>
    <text>Cytoplasmic face of coated pits and vesicles.</text>
</comment>
<comment type="developmental stage">
    <text evidence="4">Expressed throughout development.</text>
</comment>
<comment type="miscellaneous">
    <text evidence="4">There is no evidence of the neuronal splice variant found in vertebrates.</text>
</comment>
<comment type="similarity">
    <text evidence="5">Belongs to the clathrin light chain family.</text>
</comment>
<keyword id="KW-0106">Calcium</keyword>
<keyword id="KW-0168">Coated pit</keyword>
<keyword id="KW-0968">Cytoplasmic vesicle</keyword>
<keyword id="KW-0472">Membrane</keyword>
<keyword id="KW-1185">Reference proteome</keyword>
<accession>Q9VWA1</accession>
<accession>O61647</accession>
<proteinExistence type="evidence at protein level"/>
<protein>
    <recommendedName>
        <fullName>Clathrin light chain</fullName>
    </recommendedName>
    <alternativeName>
        <fullName>dClc</fullName>
    </alternativeName>
</protein>